<proteinExistence type="inferred from homology"/>
<gene>
    <name evidence="1" type="primary">truA2</name>
    <name type="ordered locus">BA_0487</name>
    <name type="ordered locus">GBAA_0487</name>
    <name type="ordered locus">BAS0462</name>
</gene>
<organism>
    <name type="scientific">Bacillus anthracis</name>
    <dbReference type="NCBI Taxonomy" id="1392"/>
    <lineage>
        <taxon>Bacteria</taxon>
        <taxon>Bacillati</taxon>
        <taxon>Bacillota</taxon>
        <taxon>Bacilli</taxon>
        <taxon>Bacillales</taxon>
        <taxon>Bacillaceae</taxon>
        <taxon>Bacillus</taxon>
        <taxon>Bacillus cereus group</taxon>
    </lineage>
</organism>
<keyword id="KW-0413">Isomerase</keyword>
<keyword id="KW-1185">Reference proteome</keyword>
<keyword id="KW-0819">tRNA processing</keyword>
<protein>
    <recommendedName>
        <fullName evidence="1">tRNA pseudouridine synthase A 2</fullName>
        <ecNumber evidence="1">5.4.99.12</ecNumber>
    </recommendedName>
    <alternativeName>
        <fullName evidence="1">tRNA pseudouridine(38-40) synthase</fullName>
    </alternativeName>
    <alternativeName>
        <fullName evidence="1">tRNA pseudouridylate synthase I 2</fullName>
    </alternativeName>
    <alternativeName>
        <fullName evidence="1">tRNA-uridine isomerase I 2</fullName>
    </alternativeName>
</protein>
<sequence length="245" mass="27928">MNNYKLTIQYDGARFKGWQRLGNNDNTIQGKIESVISEMVGKETEIIGCSRTDAGVHALNQVANFQSDEKLVEHKVKKYLNQYLPNDISITNVEEVHDRFHARYNSKAKTYLYKIWNEEHTNPFMRKYSMHVNKKLNVKSMKEAAKHLVGSHDFTAFSNAKSKKKSMVREVYSLEVMEEAGFVQIRVSGNGFLHNMVRKIVGALIEVGLGQLAAEAIPQILEAKQRNQINCLAEASGLYLENVEF</sequence>
<reference key="1">
    <citation type="journal article" date="2003" name="Nature">
        <title>The genome sequence of Bacillus anthracis Ames and comparison to closely related bacteria.</title>
        <authorList>
            <person name="Read T.D."/>
            <person name="Peterson S.N."/>
            <person name="Tourasse N.J."/>
            <person name="Baillie L.W."/>
            <person name="Paulsen I.T."/>
            <person name="Nelson K.E."/>
            <person name="Tettelin H."/>
            <person name="Fouts D.E."/>
            <person name="Eisen J.A."/>
            <person name="Gill S.R."/>
            <person name="Holtzapple E.K."/>
            <person name="Okstad O.A."/>
            <person name="Helgason E."/>
            <person name="Rilstone J."/>
            <person name="Wu M."/>
            <person name="Kolonay J.F."/>
            <person name="Beanan M.J."/>
            <person name="Dodson R.J."/>
            <person name="Brinkac L.M."/>
            <person name="Gwinn M.L."/>
            <person name="DeBoy R.T."/>
            <person name="Madpu R."/>
            <person name="Daugherty S.C."/>
            <person name="Durkin A.S."/>
            <person name="Haft D.H."/>
            <person name="Nelson W.C."/>
            <person name="Peterson J.D."/>
            <person name="Pop M."/>
            <person name="Khouri H.M."/>
            <person name="Radune D."/>
            <person name="Benton J.L."/>
            <person name="Mahamoud Y."/>
            <person name="Jiang L."/>
            <person name="Hance I.R."/>
            <person name="Weidman J.F."/>
            <person name="Berry K.J."/>
            <person name="Plaut R.D."/>
            <person name="Wolf A.M."/>
            <person name="Watkins K.L."/>
            <person name="Nierman W.C."/>
            <person name="Hazen A."/>
            <person name="Cline R.T."/>
            <person name="Redmond C."/>
            <person name="Thwaite J.E."/>
            <person name="White O."/>
            <person name="Salzberg S.L."/>
            <person name="Thomason B."/>
            <person name="Friedlander A.M."/>
            <person name="Koehler T.M."/>
            <person name="Hanna P.C."/>
            <person name="Kolstoe A.-B."/>
            <person name="Fraser C.M."/>
        </authorList>
    </citation>
    <scope>NUCLEOTIDE SEQUENCE [LARGE SCALE GENOMIC DNA]</scope>
    <source>
        <strain>Ames / isolate Porton</strain>
    </source>
</reference>
<reference key="2">
    <citation type="journal article" date="2009" name="J. Bacteriol.">
        <title>The complete genome sequence of Bacillus anthracis Ames 'Ancestor'.</title>
        <authorList>
            <person name="Ravel J."/>
            <person name="Jiang L."/>
            <person name="Stanley S.T."/>
            <person name="Wilson M.R."/>
            <person name="Decker R.S."/>
            <person name="Read T.D."/>
            <person name="Worsham P."/>
            <person name="Keim P.S."/>
            <person name="Salzberg S.L."/>
            <person name="Fraser-Liggett C.M."/>
            <person name="Rasko D.A."/>
        </authorList>
    </citation>
    <scope>NUCLEOTIDE SEQUENCE [LARGE SCALE GENOMIC DNA]</scope>
    <source>
        <strain>Ames ancestor</strain>
    </source>
</reference>
<reference key="3">
    <citation type="submission" date="2004-01" db="EMBL/GenBank/DDBJ databases">
        <title>Complete genome sequence of Bacillus anthracis Sterne.</title>
        <authorList>
            <person name="Brettin T.S."/>
            <person name="Bruce D."/>
            <person name="Challacombe J.F."/>
            <person name="Gilna P."/>
            <person name="Han C."/>
            <person name="Hill K."/>
            <person name="Hitchcock P."/>
            <person name="Jackson P."/>
            <person name="Keim P."/>
            <person name="Longmire J."/>
            <person name="Lucas S."/>
            <person name="Okinaka R."/>
            <person name="Richardson P."/>
            <person name="Rubin E."/>
            <person name="Tice H."/>
        </authorList>
    </citation>
    <scope>NUCLEOTIDE SEQUENCE [LARGE SCALE GENOMIC DNA]</scope>
    <source>
        <strain>Sterne</strain>
    </source>
</reference>
<accession>Q6I3T8</accession>
<dbReference type="EC" id="5.4.99.12" evidence="1"/>
<dbReference type="EMBL" id="AE016879">
    <property type="status" value="NOT_ANNOTATED_CDS"/>
    <property type="molecule type" value="Genomic_DNA"/>
</dbReference>
<dbReference type="EMBL" id="AE017334">
    <property type="status" value="NOT_ANNOTATED_CDS"/>
    <property type="molecule type" value="Genomic_DNA"/>
</dbReference>
<dbReference type="EMBL" id="AE017225">
    <property type="protein sequence ID" value="AAT52793.1"/>
    <property type="molecule type" value="Genomic_DNA"/>
</dbReference>
<dbReference type="RefSeq" id="YP_026742.1">
    <property type="nucleotide sequence ID" value="NC_005945.1"/>
</dbReference>
<dbReference type="SMR" id="Q6I3T8"/>
<dbReference type="STRING" id="261594.GBAA_0487"/>
<dbReference type="GeneID" id="45020538"/>
<dbReference type="KEGG" id="bat:BAS0462"/>
<dbReference type="PATRIC" id="fig|260799.14.peg.486"/>
<dbReference type="eggNOG" id="COG0101">
    <property type="taxonomic scope" value="Bacteria"/>
</dbReference>
<dbReference type="OMA" id="RKYSYHI"/>
<dbReference type="OrthoDB" id="9811823at2"/>
<dbReference type="Proteomes" id="UP000000427">
    <property type="component" value="Chromosome"/>
</dbReference>
<dbReference type="Proteomes" id="UP000000594">
    <property type="component" value="Chromosome"/>
</dbReference>
<dbReference type="GO" id="GO:0003723">
    <property type="term" value="F:RNA binding"/>
    <property type="evidence" value="ECO:0007669"/>
    <property type="project" value="InterPro"/>
</dbReference>
<dbReference type="GO" id="GO:0160147">
    <property type="term" value="F:tRNA pseudouridine(38-40) synthase activity"/>
    <property type="evidence" value="ECO:0007669"/>
    <property type="project" value="UniProtKB-EC"/>
</dbReference>
<dbReference type="GO" id="GO:0031119">
    <property type="term" value="P:tRNA pseudouridine synthesis"/>
    <property type="evidence" value="ECO:0007669"/>
    <property type="project" value="UniProtKB-UniRule"/>
</dbReference>
<dbReference type="CDD" id="cd02570">
    <property type="entry name" value="PseudoU_synth_EcTruA"/>
    <property type="match status" value="1"/>
</dbReference>
<dbReference type="FunFam" id="3.30.70.580:FF:000001">
    <property type="entry name" value="tRNA pseudouridine synthase A"/>
    <property type="match status" value="1"/>
</dbReference>
<dbReference type="Gene3D" id="3.30.70.660">
    <property type="entry name" value="Pseudouridine synthase I, catalytic domain, C-terminal subdomain"/>
    <property type="match status" value="1"/>
</dbReference>
<dbReference type="Gene3D" id="3.30.70.580">
    <property type="entry name" value="Pseudouridine synthase I, catalytic domain, N-terminal subdomain"/>
    <property type="match status" value="1"/>
</dbReference>
<dbReference type="HAMAP" id="MF_00171">
    <property type="entry name" value="TruA"/>
    <property type="match status" value="1"/>
</dbReference>
<dbReference type="InterPro" id="IPR020103">
    <property type="entry name" value="PsdUridine_synth_cat_dom_sf"/>
</dbReference>
<dbReference type="InterPro" id="IPR001406">
    <property type="entry name" value="PsdUridine_synth_TruA"/>
</dbReference>
<dbReference type="InterPro" id="IPR020097">
    <property type="entry name" value="PsdUridine_synth_TruA_a/b_dom"/>
</dbReference>
<dbReference type="InterPro" id="IPR020095">
    <property type="entry name" value="PsdUridine_synth_TruA_C"/>
</dbReference>
<dbReference type="InterPro" id="IPR020094">
    <property type="entry name" value="TruA/RsuA/RluB/E/F_N"/>
</dbReference>
<dbReference type="NCBIfam" id="TIGR00071">
    <property type="entry name" value="hisT_truA"/>
    <property type="match status" value="1"/>
</dbReference>
<dbReference type="PANTHER" id="PTHR11142">
    <property type="entry name" value="PSEUDOURIDYLATE SYNTHASE"/>
    <property type="match status" value="1"/>
</dbReference>
<dbReference type="PANTHER" id="PTHR11142:SF22">
    <property type="entry name" value="TRNA PSEUDOURIDINE SYNTHASE A 2"/>
    <property type="match status" value="1"/>
</dbReference>
<dbReference type="Pfam" id="PF01416">
    <property type="entry name" value="PseudoU_synth_1"/>
    <property type="match status" value="2"/>
</dbReference>
<dbReference type="PIRSF" id="PIRSF001430">
    <property type="entry name" value="tRNA_psdUrid_synth"/>
    <property type="match status" value="1"/>
</dbReference>
<dbReference type="SUPFAM" id="SSF55120">
    <property type="entry name" value="Pseudouridine synthase"/>
    <property type="match status" value="1"/>
</dbReference>
<name>TRUA2_BACAN</name>
<evidence type="ECO:0000255" key="1">
    <source>
        <dbReference type="HAMAP-Rule" id="MF_00171"/>
    </source>
</evidence>
<feature type="chain" id="PRO_0000057320" description="tRNA pseudouridine synthase A 2">
    <location>
        <begin position="1"/>
        <end position="245"/>
    </location>
</feature>
<feature type="active site" description="Nucleophile" evidence="1">
    <location>
        <position position="53"/>
    </location>
</feature>
<feature type="binding site" evidence="1">
    <location>
        <position position="111"/>
    </location>
    <ligand>
        <name>substrate</name>
    </ligand>
</feature>
<comment type="function">
    <text evidence="1">Formation of pseudouridine at positions 38, 39 and 40 in the anticodon stem and loop of transfer RNAs.</text>
</comment>
<comment type="catalytic activity">
    <reaction evidence="1">
        <text>uridine(38/39/40) in tRNA = pseudouridine(38/39/40) in tRNA</text>
        <dbReference type="Rhea" id="RHEA:22376"/>
        <dbReference type="Rhea" id="RHEA-COMP:10085"/>
        <dbReference type="Rhea" id="RHEA-COMP:10087"/>
        <dbReference type="ChEBI" id="CHEBI:65314"/>
        <dbReference type="ChEBI" id="CHEBI:65315"/>
        <dbReference type="EC" id="5.4.99.12"/>
    </reaction>
</comment>
<comment type="subunit">
    <text evidence="1">Homodimer.</text>
</comment>
<comment type="similarity">
    <text evidence="1">Belongs to the tRNA pseudouridine synthase TruA family.</text>
</comment>